<comment type="function">
    <text evidence="1">Contributes to the ability of the fungus to cause disease on pea plants.</text>
</comment>
<comment type="similarity">
    <text evidence="3">Belongs to the PEP2 family.</text>
</comment>
<gene>
    <name type="primary">PEP2</name>
    <name type="ORF">NECHADRAFT_73962</name>
</gene>
<proteinExistence type="inferred from homology"/>
<keyword id="KW-1185">Reference proteome</keyword>
<accession>C7ZC16</accession>
<dbReference type="EMBL" id="GG698916">
    <property type="protein sequence ID" value="EEU38514.1"/>
    <property type="molecule type" value="Genomic_DNA"/>
</dbReference>
<dbReference type="RefSeq" id="XP_003044227.1">
    <property type="nucleotide sequence ID" value="XM_003044181.1"/>
</dbReference>
<dbReference type="SMR" id="C7ZC16"/>
<dbReference type="EnsemblFungi" id="NechaT73962">
    <property type="protein sequence ID" value="NechaP73962"/>
    <property type="gene ID" value="NechaG73962"/>
</dbReference>
<dbReference type="GeneID" id="9670568"/>
<dbReference type="KEGG" id="nhe:NECHADRAFT_73962"/>
<dbReference type="VEuPathDB" id="FungiDB:NECHADRAFT_73962"/>
<dbReference type="eggNOG" id="ENOG502RB3V">
    <property type="taxonomic scope" value="Eukaryota"/>
</dbReference>
<dbReference type="HOGENOM" id="CLU_067875_0_0_1"/>
<dbReference type="InParanoid" id="C7ZC16"/>
<dbReference type="OMA" id="TGRFYDF"/>
<dbReference type="OrthoDB" id="2533647at2759"/>
<dbReference type="Proteomes" id="UP000005206">
    <property type="component" value="Unassembled WGS sequence"/>
</dbReference>
<dbReference type="Gene3D" id="3.10.450.50">
    <property type="match status" value="1"/>
</dbReference>
<dbReference type="InterPro" id="IPR032710">
    <property type="entry name" value="NTF2-like_dom_sf"/>
</dbReference>
<dbReference type="InterPro" id="IPR037401">
    <property type="entry name" value="SnoaL-like"/>
</dbReference>
<dbReference type="Pfam" id="PF13577">
    <property type="entry name" value="SnoaL_4"/>
    <property type="match status" value="1"/>
</dbReference>
<dbReference type="SUPFAM" id="SSF54427">
    <property type="entry name" value="NTF2-like"/>
    <property type="match status" value="1"/>
</dbReference>
<protein>
    <recommendedName>
        <fullName>Pea pathogenicity protein 2</fullName>
    </recommendedName>
</protein>
<evidence type="ECO:0000250" key="1"/>
<evidence type="ECO:0000256" key="2">
    <source>
        <dbReference type="SAM" id="MobiDB-lite"/>
    </source>
</evidence>
<evidence type="ECO:0000305" key="3"/>
<organism>
    <name type="scientific">Fusarium vanettenii (strain ATCC MYA-4622 / CBS 123669 / FGSC 9596 / NRRL 45880 / 77-13-4)</name>
    <name type="common">Fusarium solani subsp. pisi</name>
    <dbReference type="NCBI Taxonomy" id="660122"/>
    <lineage>
        <taxon>Eukaryota</taxon>
        <taxon>Fungi</taxon>
        <taxon>Dikarya</taxon>
        <taxon>Ascomycota</taxon>
        <taxon>Pezizomycotina</taxon>
        <taxon>Sordariomycetes</taxon>
        <taxon>Hypocreomycetidae</taxon>
        <taxon>Hypocreales</taxon>
        <taxon>Nectriaceae</taxon>
        <taxon>Fusarium</taxon>
        <taxon>Fusarium solani species complex</taxon>
        <taxon>Fusarium vanettenii</taxon>
    </lineage>
</organism>
<sequence length="233" mass="26768">MVNLHSLPQGSRPNAAIRNNGPDSLALERLKLRELAEGWPSYRDSCEWENFESIFHPGAYVYTTWSGRVAYQDFIAASKAGMDKGAFIMHRCHGSSTDINVDGTRAVTKLKATITQRFEVGGSEFDVEADCRFCFYFEKINGSWGARLVKHWYEKDKMIPVNPAKFPQVDEDKLKAYPPGYKYLAYWQETAMGIKVLLDMPGHRRHVGTVNLEKHDELYWLAKRWLEGEQIEV</sequence>
<reference key="1">
    <citation type="journal article" date="2009" name="PLoS Genet.">
        <title>The genome of Nectria haematococca: contribution of supernumerary chromosomes to gene expansion.</title>
        <authorList>
            <person name="Coleman J.J."/>
            <person name="Rounsley S.D."/>
            <person name="Rodriguez-Carres M."/>
            <person name="Kuo A."/>
            <person name="Wasmann C.C."/>
            <person name="Grimwood J."/>
            <person name="Schmutz J."/>
            <person name="Taga M."/>
            <person name="White G.J."/>
            <person name="Zhou S."/>
            <person name="Schwartz D.C."/>
            <person name="Freitag M."/>
            <person name="Ma L.-J."/>
            <person name="Danchin E.G.J."/>
            <person name="Henrissat B."/>
            <person name="Coutinho P.M."/>
            <person name="Nelson D.R."/>
            <person name="Straney D."/>
            <person name="Napoli C.A."/>
            <person name="Barker B.M."/>
            <person name="Gribskov M."/>
            <person name="Rep M."/>
            <person name="Kroken S."/>
            <person name="Molnar I."/>
            <person name="Rensing C."/>
            <person name="Kennell J.C."/>
            <person name="Zamora J."/>
            <person name="Farman M.L."/>
            <person name="Selker E.U."/>
            <person name="Salamov A."/>
            <person name="Shapiro H."/>
            <person name="Pangilinan J."/>
            <person name="Lindquist E."/>
            <person name="Lamers C."/>
            <person name="Grigoriev I.V."/>
            <person name="Geiser D.M."/>
            <person name="Covert S.F."/>
            <person name="Temporini E."/>
            <person name="VanEtten H.D."/>
        </authorList>
    </citation>
    <scope>NUCLEOTIDE SEQUENCE [LARGE SCALE GENOMIC DNA]</scope>
    <source>
        <strain>ATCC MYA-4622 / CBS 123669 / FGSC 9596 / NRRL 45880 / 77-13-4</strain>
    </source>
</reference>
<name>PEP2_FUSV7</name>
<feature type="chain" id="PRO_0000402442" description="Pea pathogenicity protein 2">
    <location>
        <begin position="1"/>
        <end position="233"/>
    </location>
</feature>
<feature type="region of interest" description="Disordered" evidence="2">
    <location>
        <begin position="1"/>
        <end position="20"/>
    </location>
</feature>
<feature type="compositionally biased region" description="Polar residues" evidence="2">
    <location>
        <begin position="1"/>
        <end position="12"/>
    </location>
</feature>